<evidence type="ECO:0000255" key="1">
    <source>
        <dbReference type="HAMAP-Rule" id="MF_01013"/>
    </source>
</evidence>
<dbReference type="EC" id="4.3.2.10" evidence="1"/>
<dbReference type="EMBL" id="CP001616">
    <property type="protein sequence ID" value="ACQ93351.1"/>
    <property type="molecule type" value="Genomic_DNA"/>
</dbReference>
<dbReference type="RefSeq" id="WP_015878822.1">
    <property type="nucleotide sequence ID" value="NC_012691.1"/>
</dbReference>
<dbReference type="SMR" id="C4LFI4"/>
<dbReference type="STRING" id="595494.Tola_1741"/>
<dbReference type="KEGG" id="tau:Tola_1741"/>
<dbReference type="eggNOG" id="COG0107">
    <property type="taxonomic scope" value="Bacteria"/>
</dbReference>
<dbReference type="HOGENOM" id="CLU_048577_4_0_6"/>
<dbReference type="OrthoDB" id="9781903at2"/>
<dbReference type="UniPathway" id="UPA00031">
    <property type="reaction ID" value="UER00010"/>
</dbReference>
<dbReference type="Proteomes" id="UP000009073">
    <property type="component" value="Chromosome"/>
</dbReference>
<dbReference type="GO" id="GO:0005737">
    <property type="term" value="C:cytoplasm"/>
    <property type="evidence" value="ECO:0007669"/>
    <property type="project" value="UniProtKB-SubCell"/>
</dbReference>
<dbReference type="GO" id="GO:0000107">
    <property type="term" value="F:imidazoleglycerol-phosphate synthase activity"/>
    <property type="evidence" value="ECO:0007669"/>
    <property type="project" value="UniProtKB-UniRule"/>
</dbReference>
<dbReference type="GO" id="GO:0016829">
    <property type="term" value="F:lyase activity"/>
    <property type="evidence" value="ECO:0007669"/>
    <property type="project" value="UniProtKB-KW"/>
</dbReference>
<dbReference type="GO" id="GO:0000105">
    <property type="term" value="P:L-histidine biosynthetic process"/>
    <property type="evidence" value="ECO:0007669"/>
    <property type="project" value="UniProtKB-UniRule"/>
</dbReference>
<dbReference type="CDD" id="cd04731">
    <property type="entry name" value="HisF"/>
    <property type="match status" value="1"/>
</dbReference>
<dbReference type="FunFam" id="3.20.20.70:FF:000006">
    <property type="entry name" value="Imidazole glycerol phosphate synthase subunit HisF"/>
    <property type="match status" value="1"/>
</dbReference>
<dbReference type="Gene3D" id="3.20.20.70">
    <property type="entry name" value="Aldolase class I"/>
    <property type="match status" value="1"/>
</dbReference>
<dbReference type="HAMAP" id="MF_01013">
    <property type="entry name" value="HisF"/>
    <property type="match status" value="1"/>
</dbReference>
<dbReference type="InterPro" id="IPR013785">
    <property type="entry name" value="Aldolase_TIM"/>
</dbReference>
<dbReference type="InterPro" id="IPR006062">
    <property type="entry name" value="His_biosynth"/>
</dbReference>
<dbReference type="InterPro" id="IPR004651">
    <property type="entry name" value="HisF"/>
</dbReference>
<dbReference type="InterPro" id="IPR050064">
    <property type="entry name" value="IGPS_HisA/HisF"/>
</dbReference>
<dbReference type="InterPro" id="IPR011060">
    <property type="entry name" value="RibuloseP-bd_barrel"/>
</dbReference>
<dbReference type="NCBIfam" id="TIGR00735">
    <property type="entry name" value="hisF"/>
    <property type="match status" value="1"/>
</dbReference>
<dbReference type="PANTHER" id="PTHR21235:SF2">
    <property type="entry name" value="IMIDAZOLE GLYCEROL PHOSPHATE SYNTHASE HISHF"/>
    <property type="match status" value="1"/>
</dbReference>
<dbReference type="PANTHER" id="PTHR21235">
    <property type="entry name" value="IMIDAZOLE GLYCEROL PHOSPHATE SYNTHASE SUBUNIT HISF/H IGP SYNTHASE SUBUNIT HISF/H"/>
    <property type="match status" value="1"/>
</dbReference>
<dbReference type="Pfam" id="PF00977">
    <property type="entry name" value="His_biosynth"/>
    <property type="match status" value="1"/>
</dbReference>
<dbReference type="SUPFAM" id="SSF51366">
    <property type="entry name" value="Ribulose-phoshate binding barrel"/>
    <property type="match status" value="1"/>
</dbReference>
<sequence>MLARRIIPCLDVKDGVVVKGIQFRNHEVMGDIVPLAKRYADEGADELVFYDITASSDARVVDKSWVSRVAEVIDIPFCVAGGIKSVEDAKRILEFGADKVSINSPALENPALITELADRFGVQCIVVGIDSYFDAATGQYQVKQYTGDENRTRITKWTTPDWVVEVQKRGAGEIVLNMMNQDGVRQGYDLTQLKLIRDLCKVPLIASGGAGEMVHFRDAFQIADVDGALAASVFHKGIIPIPELKAYLRNEGVQIRD</sequence>
<organism>
    <name type="scientific">Tolumonas auensis (strain DSM 9187 / NBRC 110442 / TA 4)</name>
    <dbReference type="NCBI Taxonomy" id="595494"/>
    <lineage>
        <taxon>Bacteria</taxon>
        <taxon>Pseudomonadati</taxon>
        <taxon>Pseudomonadota</taxon>
        <taxon>Gammaproteobacteria</taxon>
        <taxon>Aeromonadales</taxon>
        <taxon>Aeromonadaceae</taxon>
        <taxon>Tolumonas</taxon>
    </lineage>
</organism>
<keyword id="KW-0028">Amino-acid biosynthesis</keyword>
<keyword id="KW-0963">Cytoplasm</keyword>
<keyword id="KW-0368">Histidine biosynthesis</keyword>
<keyword id="KW-0456">Lyase</keyword>
<keyword id="KW-1185">Reference proteome</keyword>
<gene>
    <name evidence="1" type="primary">hisF</name>
    <name type="ordered locus">Tola_1741</name>
</gene>
<protein>
    <recommendedName>
        <fullName evidence="1">Imidazole glycerol phosphate synthase subunit HisF</fullName>
        <ecNumber evidence="1">4.3.2.10</ecNumber>
    </recommendedName>
    <alternativeName>
        <fullName evidence="1">IGP synthase cyclase subunit</fullName>
    </alternativeName>
    <alternativeName>
        <fullName evidence="1">IGP synthase subunit HisF</fullName>
    </alternativeName>
    <alternativeName>
        <fullName evidence="1">ImGP synthase subunit HisF</fullName>
        <shortName evidence="1">IGPS subunit HisF</shortName>
    </alternativeName>
</protein>
<proteinExistence type="inferred from homology"/>
<reference key="1">
    <citation type="submission" date="2009-05" db="EMBL/GenBank/DDBJ databases">
        <title>Complete sequence of Tolumonas auensis DSM 9187.</title>
        <authorList>
            <consortium name="US DOE Joint Genome Institute"/>
            <person name="Lucas S."/>
            <person name="Copeland A."/>
            <person name="Lapidus A."/>
            <person name="Glavina del Rio T."/>
            <person name="Tice H."/>
            <person name="Bruce D."/>
            <person name="Goodwin L."/>
            <person name="Pitluck S."/>
            <person name="Chertkov O."/>
            <person name="Brettin T."/>
            <person name="Detter J.C."/>
            <person name="Han C."/>
            <person name="Larimer F."/>
            <person name="Land M."/>
            <person name="Hauser L."/>
            <person name="Kyrpides N."/>
            <person name="Mikhailova N."/>
            <person name="Spring S."/>
            <person name="Beller H."/>
        </authorList>
    </citation>
    <scope>NUCLEOTIDE SEQUENCE [LARGE SCALE GENOMIC DNA]</scope>
    <source>
        <strain>DSM 9187 / NBRC 110442 / TA 4</strain>
    </source>
</reference>
<comment type="function">
    <text evidence="1">IGPS catalyzes the conversion of PRFAR and glutamine to IGP, AICAR and glutamate. The HisF subunit catalyzes the cyclization activity that produces IGP and AICAR from PRFAR using the ammonia provided by the HisH subunit.</text>
</comment>
<comment type="catalytic activity">
    <reaction evidence="1">
        <text>5-[(5-phospho-1-deoxy-D-ribulos-1-ylimino)methylamino]-1-(5-phospho-beta-D-ribosyl)imidazole-4-carboxamide + L-glutamine = D-erythro-1-(imidazol-4-yl)glycerol 3-phosphate + 5-amino-1-(5-phospho-beta-D-ribosyl)imidazole-4-carboxamide + L-glutamate + H(+)</text>
        <dbReference type="Rhea" id="RHEA:24793"/>
        <dbReference type="ChEBI" id="CHEBI:15378"/>
        <dbReference type="ChEBI" id="CHEBI:29985"/>
        <dbReference type="ChEBI" id="CHEBI:58278"/>
        <dbReference type="ChEBI" id="CHEBI:58359"/>
        <dbReference type="ChEBI" id="CHEBI:58475"/>
        <dbReference type="ChEBI" id="CHEBI:58525"/>
        <dbReference type="EC" id="4.3.2.10"/>
    </reaction>
</comment>
<comment type="pathway">
    <text evidence="1">Amino-acid biosynthesis; L-histidine biosynthesis; L-histidine from 5-phospho-alpha-D-ribose 1-diphosphate: step 5/9.</text>
</comment>
<comment type="subunit">
    <text evidence="1">Heterodimer of HisH and HisF.</text>
</comment>
<comment type="subcellular location">
    <subcellularLocation>
        <location evidence="1">Cytoplasm</location>
    </subcellularLocation>
</comment>
<comment type="similarity">
    <text evidence="1">Belongs to the HisA/HisF family.</text>
</comment>
<name>HIS6_TOLAT</name>
<feature type="chain" id="PRO_1000213220" description="Imidazole glycerol phosphate synthase subunit HisF">
    <location>
        <begin position="1"/>
        <end position="257"/>
    </location>
</feature>
<feature type="active site" evidence="1">
    <location>
        <position position="11"/>
    </location>
</feature>
<feature type="active site" evidence="1">
    <location>
        <position position="130"/>
    </location>
</feature>
<accession>C4LFI4</accession>